<proteinExistence type="inferred from homology"/>
<protein>
    <recommendedName>
        <fullName evidence="1">Ribose-5-phosphate isomerase A</fullName>
        <ecNumber evidence="1">5.3.1.6</ecNumber>
    </recommendedName>
    <alternativeName>
        <fullName evidence="1">Phosphoriboisomerase A</fullName>
        <shortName evidence="1">PRI</shortName>
    </alternativeName>
</protein>
<feature type="chain" id="PRO_1000097646" description="Ribose-5-phosphate isomerase A">
    <location>
        <begin position="1"/>
        <end position="221"/>
    </location>
</feature>
<feature type="active site" description="Proton acceptor" evidence="1">
    <location>
        <position position="103"/>
    </location>
</feature>
<feature type="binding site" evidence="1">
    <location>
        <begin position="26"/>
        <end position="29"/>
    </location>
    <ligand>
        <name>substrate</name>
    </ligand>
</feature>
<feature type="binding site" evidence="1">
    <location>
        <begin position="81"/>
        <end position="84"/>
    </location>
    <ligand>
        <name>substrate</name>
    </ligand>
</feature>
<feature type="binding site" evidence="1">
    <location>
        <begin position="94"/>
        <end position="97"/>
    </location>
    <ligand>
        <name>substrate</name>
    </ligand>
</feature>
<feature type="binding site" evidence="1">
    <location>
        <position position="121"/>
    </location>
    <ligand>
        <name>substrate</name>
    </ligand>
</feature>
<comment type="function">
    <text evidence="1">Catalyzes the reversible conversion of ribose-5-phosphate to ribulose 5-phosphate.</text>
</comment>
<comment type="catalytic activity">
    <reaction evidence="1">
        <text>aldehydo-D-ribose 5-phosphate = D-ribulose 5-phosphate</text>
        <dbReference type="Rhea" id="RHEA:14657"/>
        <dbReference type="ChEBI" id="CHEBI:58121"/>
        <dbReference type="ChEBI" id="CHEBI:58273"/>
        <dbReference type="EC" id="5.3.1.6"/>
    </reaction>
</comment>
<comment type="pathway">
    <text evidence="1">Carbohydrate degradation; pentose phosphate pathway; D-ribose 5-phosphate from D-ribulose 5-phosphate (non-oxidative stage): step 1/1.</text>
</comment>
<comment type="subunit">
    <text evidence="1">Homodimer.</text>
</comment>
<comment type="similarity">
    <text evidence="1">Belongs to the ribose 5-phosphate isomerase family.</text>
</comment>
<name>RPIA_BACMK</name>
<organism>
    <name type="scientific">Bacillus mycoides (strain KBAB4)</name>
    <name type="common">Bacillus weihenstephanensis</name>
    <dbReference type="NCBI Taxonomy" id="315730"/>
    <lineage>
        <taxon>Bacteria</taxon>
        <taxon>Bacillati</taxon>
        <taxon>Bacillota</taxon>
        <taxon>Bacilli</taxon>
        <taxon>Bacillales</taxon>
        <taxon>Bacillaceae</taxon>
        <taxon>Bacillus</taxon>
        <taxon>Bacillus cereus group</taxon>
    </lineage>
</organism>
<sequence>MMNLKQLAGEYAAGFVRDGMTIGLGTGSTVYWTIQKLGHRVQEGLSIQAVPTSKETEVLAKQLSIPLISLNEIDILDLTIDGADEINNDLQLIKGGGGALLREKIVATSSKELIIIADESKLVSHLGTFPLPIEIISFSWKQTEKRIQSLGCETHLRMKDSRPFITDNGNLIIDCIFPNKILNPNDTHTELKMITGVVETGLFINMKSKAIIGTKNGIKEY</sequence>
<gene>
    <name evidence="1" type="primary">rpiA</name>
    <name type="ordered locus">BcerKBAB4_2596</name>
</gene>
<dbReference type="EC" id="5.3.1.6" evidence="1"/>
<dbReference type="EMBL" id="CP000903">
    <property type="protein sequence ID" value="ABY43798.1"/>
    <property type="molecule type" value="Genomic_DNA"/>
</dbReference>
<dbReference type="SMR" id="A9VID8"/>
<dbReference type="KEGG" id="bwe:BcerKBAB4_2596"/>
<dbReference type="eggNOG" id="COG0120">
    <property type="taxonomic scope" value="Bacteria"/>
</dbReference>
<dbReference type="HOGENOM" id="CLU_056590_1_0_9"/>
<dbReference type="UniPathway" id="UPA00115">
    <property type="reaction ID" value="UER00412"/>
</dbReference>
<dbReference type="Proteomes" id="UP000002154">
    <property type="component" value="Chromosome"/>
</dbReference>
<dbReference type="GO" id="GO:0005829">
    <property type="term" value="C:cytosol"/>
    <property type="evidence" value="ECO:0007669"/>
    <property type="project" value="TreeGrafter"/>
</dbReference>
<dbReference type="GO" id="GO:0004751">
    <property type="term" value="F:ribose-5-phosphate isomerase activity"/>
    <property type="evidence" value="ECO:0007669"/>
    <property type="project" value="UniProtKB-UniRule"/>
</dbReference>
<dbReference type="GO" id="GO:0006014">
    <property type="term" value="P:D-ribose metabolic process"/>
    <property type="evidence" value="ECO:0007669"/>
    <property type="project" value="TreeGrafter"/>
</dbReference>
<dbReference type="GO" id="GO:0009052">
    <property type="term" value="P:pentose-phosphate shunt, non-oxidative branch"/>
    <property type="evidence" value="ECO:0007669"/>
    <property type="project" value="UniProtKB-UniRule"/>
</dbReference>
<dbReference type="CDD" id="cd01398">
    <property type="entry name" value="RPI_A"/>
    <property type="match status" value="1"/>
</dbReference>
<dbReference type="FunFam" id="3.40.50.1360:FF:000001">
    <property type="entry name" value="Ribose-5-phosphate isomerase A"/>
    <property type="match status" value="1"/>
</dbReference>
<dbReference type="Gene3D" id="3.30.70.260">
    <property type="match status" value="1"/>
</dbReference>
<dbReference type="Gene3D" id="3.40.50.1360">
    <property type="match status" value="1"/>
</dbReference>
<dbReference type="HAMAP" id="MF_00170">
    <property type="entry name" value="Rib_5P_isom_A"/>
    <property type="match status" value="1"/>
</dbReference>
<dbReference type="InterPro" id="IPR037171">
    <property type="entry name" value="NagB/RpiA_transferase-like"/>
</dbReference>
<dbReference type="InterPro" id="IPR020672">
    <property type="entry name" value="Ribose5P_isomerase_typA_subgr"/>
</dbReference>
<dbReference type="InterPro" id="IPR004788">
    <property type="entry name" value="Ribose5P_isomerase_type_A"/>
</dbReference>
<dbReference type="NCBIfam" id="NF001924">
    <property type="entry name" value="PRK00702.1"/>
    <property type="match status" value="1"/>
</dbReference>
<dbReference type="NCBIfam" id="TIGR00021">
    <property type="entry name" value="rpiA"/>
    <property type="match status" value="1"/>
</dbReference>
<dbReference type="PANTHER" id="PTHR11934">
    <property type="entry name" value="RIBOSE-5-PHOSPHATE ISOMERASE"/>
    <property type="match status" value="1"/>
</dbReference>
<dbReference type="PANTHER" id="PTHR11934:SF0">
    <property type="entry name" value="RIBOSE-5-PHOSPHATE ISOMERASE"/>
    <property type="match status" value="1"/>
</dbReference>
<dbReference type="Pfam" id="PF06026">
    <property type="entry name" value="Rib_5-P_isom_A"/>
    <property type="match status" value="1"/>
</dbReference>
<dbReference type="SUPFAM" id="SSF75445">
    <property type="entry name" value="D-ribose-5-phosphate isomerase (RpiA), lid domain"/>
    <property type="match status" value="1"/>
</dbReference>
<dbReference type="SUPFAM" id="SSF100950">
    <property type="entry name" value="NagB/RpiA/CoA transferase-like"/>
    <property type="match status" value="1"/>
</dbReference>
<accession>A9VID8</accession>
<reference key="1">
    <citation type="journal article" date="2008" name="Chem. Biol. Interact.">
        <title>Extending the Bacillus cereus group genomics to putative food-borne pathogens of different toxicity.</title>
        <authorList>
            <person name="Lapidus A."/>
            <person name="Goltsman E."/>
            <person name="Auger S."/>
            <person name="Galleron N."/>
            <person name="Segurens B."/>
            <person name="Dossat C."/>
            <person name="Land M.L."/>
            <person name="Broussolle V."/>
            <person name="Brillard J."/>
            <person name="Guinebretiere M.-H."/>
            <person name="Sanchis V."/>
            <person name="Nguen-the C."/>
            <person name="Lereclus D."/>
            <person name="Richardson P."/>
            <person name="Wincker P."/>
            <person name="Weissenbach J."/>
            <person name="Ehrlich S.D."/>
            <person name="Sorokin A."/>
        </authorList>
    </citation>
    <scope>NUCLEOTIDE SEQUENCE [LARGE SCALE GENOMIC DNA]</scope>
    <source>
        <strain>KBAB4</strain>
    </source>
</reference>
<keyword id="KW-0413">Isomerase</keyword>
<evidence type="ECO:0000255" key="1">
    <source>
        <dbReference type="HAMAP-Rule" id="MF_00170"/>
    </source>
</evidence>